<gene>
    <name evidence="1" type="primary">petB</name>
    <name type="ordered locus">sync_0549</name>
</gene>
<name>CYB6_SYNS3</name>
<reference key="1">
    <citation type="journal article" date="2006" name="Proc. Natl. Acad. Sci. U.S.A.">
        <title>Genome sequence of Synechococcus CC9311: insights into adaptation to a coastal environment.</title>
        <authorList>
            <person name="Palenik B."/>
            <person name="Ren Q."/>
            <person name="Dupont C.L."/>
            <person name="Myers G.S."/>
            <person name="Heidelberg J.F."/>
            <person name="Badger J.H."/>
            <person name="Madupu R."/>
            <person name="Nelson W.C."/>
            <person name="Brinkac L.M."/>
            <person name="Dodson R.J."/>
            <person name="Durkin A.S."/>
            <person name="Daugherty S.C."/>
            <person name="Sullivan S.A."/>
            <person name="Khouri H."/>
            <person name="Mohamoud Y."/>
            <person name="Halpin R."/>
            <person name="Paulsen I.T."/>
        </authorList>
    </citation>
    <scope>NUCLEOTIDE SEQUENCE [LARGE SCALE GENOMIC DNA]</scope>
    <source>
        <strain>CC9311</strain>
    </source>
</reference>
<feature type="chain" id="PRO_1000061418" description="Cytochrome b6">
    <location>
        <begin position="1"/>
        <end position="218"/>
    </location>
</feature>
<feature type="transmembrane region" description="Helical" evidence="1">
    <location>
        <begin position="35"/>
        <end position="55"/>
    </location>
</feature>
<feature type="transmembrane region" description="Helical" evidence="1">
    <location>
        <begin position="93"/>
        <end position="113"/>
    </location>
</feature>
<feature type="transmembrane region" description="Helical" evidence="1">
    <location>
        <begin position="119"/>
        <end position="139"/>
    </location>
</feature>
<feature type="transmembrane region" description="Helical" evidence="1">
    <location>
        <begin position="189"/>
        <end position="209"/>
    </location>
</feature>
<feature type="binding site" description="covalent" evidence="1">
    <location>
        <position position="38"/>
    </location>
    <ligand>
        <name>heme c</name>
        <dbReference type="ChEBI" id="CHEBI:61717"/>
    </ligand>
</feature>
<feature type="binding site" description="axial binding residue" evidence="1">
    <location>
        <position position="89"/>
    </location>
    <ligand>
        <name>heme b</name>
        <dbReference type="ChEBI" id="CHEBI:60344"/>
        <label>2</label>
    </ligand>
    <ligandPart>
        <name>Fe</name>
        <dbReference type="ChEBI" id="CHEBI:18248"/>
    </ligandPart>
</feature>
<feature type="binding site" description="axial binding residue" evidence="1">
    <location>
        <position position="103"/>
    </location>
    <ligand>
        <name>heme b</name>
        <dbReference type="ChEBI" id="CHEBI:60344"/>
        <label>1</label>
    </ligand>
    <ligandPart>
        <name>Fe</name>
        <dbReference type="ChEBI" id="CHEBI:18248"/>
    </ligandPart>
</feature>
<feature type="binding site" description="axial binding residue" evidence="1">
    <location>
        <position position="190"/>
    </location>
    <ligand>
        <name>heme b</name>
        <dbReference type="ChEBI" id="CHEBI:60344"/>
        <label>2</label>
    </ligand>
    <ligandPart>
        <name>Fe</name>
        <dbReference type="ChEBI" id="CHEBI:18248"/>
    </ligandPart>
</feature>
<feature type="binding site" description="axial binding residue" evidence="1">
    <location>
        <position position="205"/>
    </location>
    <ligand>
        <name>heme b</name>
        <dbReference type="ChEBI" id="CHEBI:60344"/>
        <label>1</label>
    </ligand>
    <ligandPart>
        <name>Fe</name>
        <dbReference type="ChEBI" id="CHEBI:18248"/>
    </ligandPart>
</feature>
<evidence type="ECO:0000255" key="1">
    <source>
        <dbReference type="HAMAP-Rule" id="MF_00633"/>
    </source>
</evidence>
<accession>Q0ICP8</accession>
<sequence length="218" mass="24705">MANSSPVYDWFQERLEIQDIADDFSTKYVPPHVNIFYCLGGITLVCFLIQFATGFAMTFYYKPTVAEAYSSVQYLMTDVSFGWLIRSVHRWSASMMVLMLILHVFRVYLTGGFKRPRELTWVTGVTMAVITVSFGVTGYSLPWDQVGYWAVKIVSGVPAAIPVVGDFMVELLRGGESVGQSTLTRFYSLHTFVMPWLLAVFMLMHFLMIRKQGISGPL</sequence>
<comment type="function">
    <text evidence="1">Component of the cytochrome b6-f complex, which mediates electron transfer between photosystem II (PSII) and photosystem I (PSI), cyclic electron flow around PSI, and state transitions.</text>
</comment>
<comment type="cofactor">
    <cofactor evidence="1">
        <name>heme b</name>
        <dbReference type="ChEBI" id="CHEBI:60344"/>
    </cofactor>
    <text evidence="1">Binds 2 heme b groups non-covalently with two histidine residues as axial ligands.</text>
</comment>
<comment type="cofactor">
    <cofactor evidence="1">
        <name>heme c</name>
        <dbReference type="ChEBI" id="CHEBI:61717"/>
    </cofactor>
    <text evidence="1">Binds one heme group covalently by a single cysteine link with no axial amino acid ligand. This heme was named heme ci.</text>
</comment>
<comment type="subunit">
    <text evidence="1">The 4 large subunits of the cytochrome b6-f complex are cytochrome b6, subunit IV (17 kDa polypeptide, PetD), cytochrome f and the Rieske protein, while the 4 small subunits are PetG, PetL, PetM and PetN. The complex functions as a dimer.</text>
</comment>
<comment type="subcellular location">
    <subcellularLocation>
        <location evidence="1">Cellular thylakoid membrane</location>
        <topology evidence="1">Multi-pass membrane protein</topology>
    </subcellularLocation>
</comment>
<comment type="miscellaneous">
    <text evidence="1">Heme 1 (or BH or b566) is high-potential and absorbs at about 566 nm, and heme 2 (or BL or b562) is low-potential and absorbs at about 562 nm.</text>
</comment>
<comment type="similarity">
    <text evidence="1">Belongs to the cytochrome b family. PetB subfamily.</text>
</comment>
<organism>
    <name type="scientific">Synechococcus sp. (strain CC9311)</name>
    <dbReference type="NCBI Taxonomy" id="64471"/>
    <lineage>
        <taxon>Bacteria</taxon>
        <taxon>Bacillati</taxon>
        <taxon>Cyanobacteriota</taxon>
        <taxon>Cyanophyceae</taxon>
        <taxon>Synechococcales</taxon>
        <taxon>Synechococcaceae</taxon>
        <taxon>Synechococcus</taxon>
    </lineage>
</organism>
<proteinExistence type="inferred from homology"/>
<protein>
    <recommendedName>
        <fullName evidence="1">Cytochrome b6</fullName>
    </recommendedName>
</protein>
<dbReference type="EMBL" id="CP000435">
    <property type="protein sequence ID" value="ABI45627.1"/>
    <property type="molecule type" value="Genomic_DNA"/>
</dbReference>
<dbReference type="RefSeq" id="WP_006854932.1">
    <property type="nucleotide sequence ID" value="NC_008319.1"/>
</dbReference>
<dbReference type="SMR" id="Q0ICP8"/>
<dbReference type="STRING" id="64471.sync_0549"/>
<dbReference type="KEGG" id="syg:sync_0549"/>
<dbReference type="eggNOG" id="COG1290">
    <property type="taxonomic scope" value="Bacteria"/>
</dbReference>
<dbReference type="HOGENOM" id="CLU_031114_0_2_3"/>
<dbReference type="OrthoDB" id="9804503at2"/>
<dbReference type="Proteomes" id="UP000001961">
    <property type="component" value="Chromosome"/>
</dbReference>
<dbReference type="GO" id="GO:0031676">
    <property type="term" value="C:plasma membrane-derived thylakoid membrane"/>
    <property type="evidence" value="ECO:0007669"/>
    <property type="project" value="UniProtKB-SubCell"/>
</dbReference>
<dbReference type="GO" id="GO:0045158">
    <property type="term" value="F:electron transporter, transferring electrons within cytochrome b6/f complex of photosystem II activity"/>
    <property type="evidence" value="ECO:0007669"/>
    <property type="project" value="UniProtKB-UniRule"/>
</dbReference>
<dbReference type="GO" id="GO:0046872">
    <property type="term" value="F:metal ion binding"/>
    <property type="evidence" value="ECO:0007669"/>
    <property type="project" value="UniProtKB-KW"/>
</dbReference>
<dbReference type="GO" id="GO:0016491">
    <property type="term" value="F:oxidoreductase activity"/>
    <property type="evidence" value="ECO:0007669"/>
    <property type="project" value="InterPro"/>
</dbReference>
<dbReference type="GO" id="GO:0015979">
    <property type="term" value="P:photosynthesis"/>
    <property type="evidence" value="ECO:0007669"/>
    <property type="project" value="UniProtKB-UniRule"/>
</dbReference>
<dbReference type="GO" id="GO:0022904">
    <property type="term" value="P:respiratory electron transport chain"/>
    <property type="evidence" value="ECO:0007669"/>
    <property type="project" value="InterPro"/>
</dbReference>
<dbReference type="CDD" id="cd00284">
    <property type="entry name" value="Cytochrome_b_N"/>
    <property type="match status" value="1"/>
</dbReference>
<dbReference type="FunFam" id="1.20.810.10:FF:000001">
    <property type="entry name" value="Cytochrome b6"/>
    <property type="match status" value="1"/>
</dbReference>
<dbReference type="Gene3D" id="1.20.810.10">
    <property type="entry name" value="Cytochrome Bc1 Complex, Chain C"/>
    <property type="match status" value="1"/>
</dbReference>
<dbReference type="HAMAP" id="MF_00633">
    <property type="entry name" value="Cytb6_f_cytb6"/>
    <property type="match status" value="1"/>
</dbReference>
<dbReference type="InterPro" id="IPR005797">
    <property type="entry name" value="Cyt_b/b6_N"/>
</dbReference>
<dbReference type="InterPro" id="IPR023530">
    <property type="entry name" value="Cyt_B6_PetB"/>
</dbReference>
<dbReference type="InterPro" id="IPR027387">
    <property type="entry name" value="Cytb/b6-like_sf"/>
</dbReference>
<dbReference type="InterPro" id="IPR048259">
    <property type="entry name" value="Cytochrome_b_N_euk/bac"/>
</dbReference>
<dbReference type="InterPro" id="IPR016174">
    <property type="entry name" value="Di-haem_cyt_TM"/>
</dbReference>
<dbReference type="NCBIfam" id="NF002990">
    <property type="entry name" value="PRK03735.1"/>
    <property type="match status" value="1"/>
</dbReference>
<dbReference type="PANTHER" id="PTHR19271">
    <property type="entry name" value="CYTOCHROME B"/>
    <property type="match status" value="1"/>
</dbReference>
<dbReference type="PANTHER" id="PTHR19271:SF16">
    <property type="entry name" value="CYTOCHROME B"/>
    <property type="match status" value="1"/>
</dbReference>
<dbReference type="Pfam" id="PF00033">
    <property type="entry name" value="Cytochrome_B"/>
    <property type="match status" value="1"/>
</dbReference>
<dbReference type="PIRSF" id="PIRSF000032">
    <property type="entry name" value="Cytochrome_b6"/>
    <property type="match status" value="1"/>
</dbReference>
<dbReference type="SUPFAM" id="SSF81342">
    <property type="entry name" value="Transmembrane di-heme cytochromes"/>
    <property type="match status" value="1"/>
</dbReference>
<dbReference type="PROSITE" id="PS51002">
    <property type="entry name" value="CYTB_NTER"/>
    <property type="match status" value="1"/>
</dbReference>
<keyword id="KW-0249">Electron transport</keyword>
<keyword id="KW-0349">Heme</keyword>
<keyword id="KW-0408">Iron</keyword>
<keyword id="KW-0472">Membrane</keyword>
<keyword id="KW-0479">Metal-binding</keyword>
<keyword id="KW-0602">Photosynthesis</keyword>
<keyword id="KW-1185">Reference proteome</keyword>
<keyword id="KW-0793">Thylakoid</keyword>
<keyword id="KW-0812">Transmembrane</keyword>
<keyword id="KW-1133">Transmembrane helix</keyword>
<keyword id="KW-0813">Transport</keyword>